<name>PFA5_CANAL</name>
<sequence length="405" mass="47820">MIWRKEYLKKNYIKLLVPICVVLVLAYLNYAINYAVGYKLVYVHHSHAVAIILWVLLGFFQLELLVYWVLIFLVGPGKSPVFPPIDLYSENNKGLIPLPDLFFCDEKGFPYYCSNSNSIKLERSFFSKDVGYNVIKFDHYCIWIGQPIGQDNYLFFMKFMMGFLAFFIIVLIYCARFTRESIQQGEIDHNFIVLFVMSGFWIIMIGCLFGIHLRYVSINMTTLDEITINQRKRYNRWKDARKNPNMPSWMKTKNPPRKETGRKYVNVKHKTGRAIVRYYIDERPFDMGFRRNWINLVFNGNRNHGKDDEFYTLWRLAAAFVVFIIPFIDIPFSFRGKLQVKDDVEQELHEQENLLAKYTVYSSVVNDKFMNMIDEKLKKNSYSAPGYLVETTPQNNQSTIDKDSI</sequence>
<gene>
    <name type="primary">PFA5</name>
    <name type="ordered locus">CAALFM_C501440CA</name>
    <name type="ORF">CaO19.11611</name>
    <name type="ORF">CaO19.4134</name>
</gene>
<organism>
    <name type="scientific">Candida albicans (strain SC5314 / ATCC MYA-2876)</name>
    <name type="common">Yeast</name>
    <dbReference type="NCBI Taxonomy" id="237561"/>
    <lineage>
        <taxon>Eukaryota</taxon>
        <taxon>Fungi</taxon>
        <taxon>Dikarya</taxon>
        <taxon>Ascomycota</taxon>
        <taxon>Saccharomycotina</taxon>
        <taxon>Pichiomycetes</taxon>
        <taxon>Debaryomycetaceae</taxon>
        <taxon>Candida/Lodderomyces clade</taxon>
        <taxon>Candida</taxon>
    </lineage>
</organism>
<feature type="chain" id="PRO_0000212975" description="Palmitoyltransferase PFA5">
    <location>
        <begin position="1"/>
        <end position="405"/>
    </location>
</feature>
<feature type="transmembrane region" description="Helical" evidence="2">
    <location>
        <begin position="12"/>
        <end position="32"/>
    </location>
</feature>
<feature type="transmembrane region" description="Helical" evidence="2">
    <location>
        <begin position="51"/>
        <end position="71"/>
    </location>
</feature>
<feature type="transmembrane region" description="Helical" evidence="2">
    <location>
        <begin position="154"/>
        <end position="174"/>
    </location>
</feature>
<feature type="transmembrane region" description="Helical" evidence="2">
    <location>
        <begin position="191"/>
        <end position="211"/>
    </location>
</feature>
<feature type="transmembrane region" description="Helical" evidence="2">
    <location>
        <begin position="310"/>
        <end position="330"/>
    </location>
</feature>
<feature type="domain" description="DHHC" evidence="3">
    <location>
        <begin position="111"/>
        <end position="161"/>
    </location>
</feature>
<comment type="catalytic activity">
    <reaction>
        <text>L-cysteinyl-[protein] + hexadecanoyl-CoA = S-hexadecanoyl-L-cysteinyl-[protein] + CoA</text>
        <dbReference type="Rhea" id="RHEA:36683"/>
        <dbReference type="Rhea" id="RHEA-COMP:10131"/>
        <dbReference type="Rhea" id="RHEA-COMP:11032"/>
        <dbReference type="ChEBI" id="CHEBI:29950"/>
        <dbReference type="ChEBI" id="CHEBI:57287"/>
        <dbReference type="ChEBI" id="CHEBI:57379"/>
        <dbReference type="ChEBI" id="CHEBI:74151"/>
        <dbReference type="EC" id="2.3.1.225"/>
    </reaction>
</comment>
<comment type="subcellular location">
    <subcellularLocation>
        <location evidence="4">Membrane</location>
        <topology evidence="4">Multi-pass membrane protein</topology>
    </subcellularLocation>
</comment>
<comment type="domain">
    <text evidence="1">The DHHC domain is required for palmitoyltransferase activity.</text>
</comment>
<comment type="PTM">
    <text evidence="1">Autopalmitoylated.</text>
</comment>
<comment type="similarity">
    <text evidence="4">Belongs to the DHHC palmitoyltransferase family. PFA5 subfamily.</text>
</comment>
<keyword id="KW-0012">Acyltransferase</keyword>
<keyword id="KW-0449">Lipoprotein</keyword>
<keyword id="KW-0472">Membrane</keyword>
<keyword id="KW-0564">Palmitate</keyword>
<keyword id="KW-1185">Reference proteome</keyword>
<keyword id="KW-0808">Transferase</keyword>
<keyword id="KW-0812">Transmembrane</keyword>
<keyword id="KW-1133">Transmembrane helix</keyword>
<dbReference type="EC" id="2.3.1.225"/>
<dbReference type="EMBL" id="CP017627">
    <property type="protein sequence ID" value="AOW29577.1"/>
    <property type="molecule type" value="Genomic_DNA"/>
</dbReference>
<dbReference type="RefSeq" id="XP_711338.2">
    <property type="nucleotide sequence ID" value="XM_706246.2"/>
</dbReference>
<dbReference type="FunCoup" id="Q59NR8">
    <property type="interactions" value="937"/>
</dbReference>
<dbReference type="STRING" id="237561.Q59NR8"/>
<dbReference type="EnsemblFungi" id="C5_01440C_A-T">
    <property type="protein sequence ID" value="C5_01440C_A-T-p1"/>
    <property type="gene ID" value="C5_01440C_A"/>
</dbReference>
<dbReference type="GeneID" id="3647043"/>
<dbReference type="KEGG" id="cal:CAALFM_C501440CA"/>
<dbReference type="CGD" id="CAL0000196002">
    <property type="gene designation" value="orf19.11611"/>
</dbReference>
<dbReference type="VEuPathDB" id="FungiDB:C5_01440C_A"/>
<dbReference type="eggNOG" id="KOG1311">
    <property type="taxonomic scope" value="Eukaryota"/>
</dbReference>
<dbReference type="HOGENOM" id="CLU_715709_0_0_1"/>
<dbReference type="InParanoid" id="Q59NR8"/>
<dbReference type="OrthoDB" id="331948at2759"/>
<dbReference type="PRO" id="PR:Q59NR8"/>
<dbReference type="Proteomes" id="UP000000559">
    <property type="component" value="Chromosome 5"/>
</dbReference>
<dbReference type="GO" id="GO:0005783">
    <property type="term" value="C:endoplasmic reticulum"/>
    <property type="evidence" value="ECO:0000318"/>
    <property type="project" value="GO_Central"/>
</dbReference>
<dbReference type="GO" id="GO:0005794">
    <property type="term" value="C:Golgi apparatus"/>
    <property type="evidence" value="ECO:0000318"/>
    <property type="project" value="GO_Central"/>
</dbReference>
<dbReference type="GO" id="GO:0016020">
    <property type="term" value="C:membrane"/>
    <property type="evidence" value="ECO:0007669"/>
    <property type="project" value="UniProtKB-SubCell"/>
</dbReference>
<dbReference type="GO" id="GO:0019706">
    <property type="term" value="F:protein-cysteine S-palmitoyltransferase activity"/>
    <property type="evidence" value="ECO:0000318"/>
    <property type="project" value="GO_Central"/>
</dbReference>
<dbReference type="GO" id="GO:0006612">
    <property type="term" value="P:protein targeting to membrane"/>
    <property type="evidence" value="ECO:0000318"/>
    <property type="project" value="GO_Central"/>
</dbReference>
<dbReference type="InterPro" id="IPR001594">
    <property type="entry name" value="Palmitoyltrfase_DHHC"/>
</dbReference>
<dbReference type="InterPro" id="IPR039859">
    <property type="entry name" value="PFA4/ZDH16/20/ERF2-like"/>
</dbReference>
<dbReference type="PANTHER" id="PTHR22883:SF23">
    <property type="entry name" value="PALMITOYLTRANSFERASE ZDHHC6"/>
    <property type="match status" value="1"/>
</dbReference>
<dbReference type="PANTHER" id="PTHR22883">
    <property type="entry name" value="ZINC FINGER DHHC DOMAIN CONTAINING PROTEIN"/>
    <property type="match status" value="1"/>
</dbReference>
<dbReference type="Pfam" id="PF01529">
    <property type="entry name" value="DHHC"/>
    <property type="match status" value="1"/>
</dbReference>
<dbReference type="PROSITE" id="PS50216">
    <property type="entry name" value="DHHC"/>
    <property type="match status" value="1"/>
</dbReference>
<proteinExistence type="inferred from homology"/>
<protein>
    <recommendedName>
        <fullName>Palmitoyltransferase PFA5</fullName>
        <ecNumber>2.3.1.225</ecNumber>
    </recommendedName>
    <alternativeName>
        <fullName>Protein fatty acyltransferase 5</fullName>
    </alternativeName>
</protein>
<reference key="1">
    <citation type="journal article" date="2004" name="Proc. Natl. Acad. Sci. U.S.A.">
        <title>The diploid genome sequence of Candida albicans.</title>
        <authorList>
            <person name="Jones T."/>
            <person name="Federspiel N.A."/>
            <person name="Chibana H."/>
            <person name="Dungan J."/>
            <person name="Kalman S."/>
            <person name="Magee B.B."/>
            <person name="Newport G."/>
            <person name="Thorstenson Y.R."/>
            <person name="Agabian N."/>
            <person name="Magee P.T."/>
            <person name="Davis R.W."/>
            <person name="Scherer S."/>
        </authorList>
    </citation>
    <scope>NUCLEOTIDE SEQUENCE [LARGE SCALE GENOMIC DNA]</scope>
    <source>
        <strain>SC5314 / ATCC MYA-2876</strain>
    </source>
</reference>
<reference key="2">
    <citation type="journal article" date="2007" name="Genome Biol.">
        <title>Assembly of the Candida albicans genome into sixteen supercontigs aligned on the eight chromosomes.</title>
        <authorList>
            <person name="van het Hoog M."/>
            <person name="Rast T.J."/>
            <person name="Martchenko M."/>
            <person name="Grindle S."/>
            <person name="Dignard D."/>
            <person name="Hogues H."/>
            <person name="Cuomo C."/>
            <person name="Berriman M."/>
            <person name="Scherer S."/>
            <person name="Magee B.B."/>
            <person name="Whiteway M."/>
            <person name="Chibana H."/>
            <person name="Nantel A."/>
            <person name="Magee P.T."/>
        </authorList>
    </citation>
    <scope>GENOME REANNOTATION</scope>
    <source>
        <strain>SC5314 / ATCC MYA-2876</strain>
    </source>
</reference>
<reference key="3">
    <citation type="journal article" date="2013" name="Genome Biol.">
        <title>Assembly of a phased diploid Candida albicans genome facilitates allele-specific measurements and provides a simple model for repeat and indel structure.</title>
        <authorList>
            <person name="Muzzey D."/>
            <person name="Schwartz K."/>
            <person name="Weissman J.S."/>
            <person name="Sherlock G."/>
        </authorList>
    </citation>
    <scope>NUCLEOTIDE SEQUENCE [LARGE SCALE GENOMIC DNA]</scope>
    <scope>GENOME REANNOTATION</scope>
    <source>
        <strain>SC5314 / ATCC MYA-2876</strain>
    </source>
</reference>
<accession>Q59NR8</accession>
<accession>A0A1D8PN74</accession>
<evidence type="ECO:0000250" key="1"/>
<evidence type="ECO:0000255" key="2"/>
<evidence type="ECO:0000255" key="3">
    <source>
        <dbReference type="PROSITE-ProRule" id="PRU00067"/>
    </source>
</evidence>
<evidence type="ECO:0000305" key="4"/>